<reference key="1">
    <citation type="journal article" date="2004" name="J. Bacteriol.">
        <title>Comparative genomics of two Leptospira interrogans serovars reveals novel insights into physiology and pathogenesis.</title>
        <authorList>
            <person name="Nascimento A.L.T.O."/>
            <person name="Ko A.I."/>
            <person name="Martins E.A.L."/>
            <person name="Monteiro-Vitorello C.B."/>
            <person name="Ho P.L."/>
            <person name="Haake D.A."/>
            <person name="Verjovski-Almeida S."/>
            <person name="Hartskeerl R.A."/>
            <person name="Marques M.V."/>
            <person name="Oliveira M.C."/>
            <person name="Menck C.F.M."/>
            <person name="Leite L.C.C."/>
            <person name="Carrer H."/>
            <person name="Coutinho L.L."/>
            <person name="Degrave W.M."/>
            <person name="Dellagostin O.A."/>
            <person name="El-Dorry H."/>
            <person name="Ferro E.S."/>
            <person name="Ferro M.I.T."/>
            <person name="Furlan L.R."/>
            <person name="Gamberini M."/>
            <person name="Giglioti E.A."/>
            <person name="Goes-Neto A."/>
            <person name="Goldman G.H."/>
            <person name="Goldman M.H.S."/>
            <person name="Harakava R."/>
            <person name="Jeronimo S.M.B."/>
            <person name="Junqueira-de-Azevedo I.L.M."/>
            <person name="Kimura E.T."/>
            <person name="Kuramae E.E."/>
            <person name="Lemos E.G.M."/>
            <person name="Lemos M.V.F."/>
            <person name="Marino C.L."/>
            <person name="Nunes L.R."/>
            <person name="de Oliveira R.C."/>
            <person name="Pereira G.G."/>
            <person name="Reis M.S."/>
            <person name="Schriefer A."/>
            <person name="Siqueira W.J."/>
            <person name="Sommer P."/>
            <person name="Tsai S.M."/>
            <person name="Simpson A.J.G."/>
            <person name="Ferro J.A."/>
            <person name="Camargo L.E.A."/>
            <person name="Kitajima J.P."/>
            <person name="Setubal J.C."/>
            <person name="Van Sluys M.A."/>
        </authorList>
    </citation>
    <scope>NUCLEOTIDE SEQUENCE [LARGE SCALE GENOMIC DNA]</scope>
    <source>
        <strain>Fiocruz L1-130</strain>
    </source>
</reference>
<organism>
    <name type="scientific">Leptospira interrogans serogroup Icterohaemorrhagiae serovar copenhageni (strain Fiocruz L1-130)</name>
    <dbReference type="NCBI Taxonomy" id="267671"/>
    <lineage>
        <taxon>Bacteria</taxon>
        <taxon>Pseudomonadati</taxon>
        <taxon>Spirochaetota</taxon>
        <taxon>Spirochaetia</taxon>
        <taxon>Leptospirales</taxon>
        <taxon>Leptospiraceae</taxon>
        <taxon>Leptospira</taxon>
    </lineage>
</organism>
<comment type="function">
    <text evidence="1">Catalyzes the synthesis of alpha-ribazole-5'-phosphate from nicotinate mononucleotide (NAMN) and 5,6-dimethylbenzimidazole (DMB).</text>
</comment>
<comment type="catalytic activity">
    <reaction evidence="1">
        <text>5,6-dimethylbenzimidazole + nicotinate beta-D-ribonucleotide = alpha-ribazole 5'-phosphate + nicotinate + H(+)</text>
        <dbReference type="Rhea" id="RHEA:11196"/>
        <dbReference type="ChEBI" id="CHEBI:15378"/>
        <dbReference type="ChEBI" id="CHEBI:15890"/>
        <dbReference type="ChEBI" id="CHEBI:32544"/>
        <dbReference type="ChEBI" id="CHEBI:57502"/>
        <dbReference type="ChEBI" id="CHEBI:57918"/>
        <dbReference type="EC" id="2.4.2.21"/>
    </reaction>
</comment>
<comment type="pathway">
    <text evidence="1">Nucleoside biosynthesis; alpha-ribazole biosynthesis; alpha-ribazole from 5,6-dimethylbenzimidazole: step 1/2.</text>
</comment>
<comment type="similarity">
    <text evidence="1">Belongs to the CobT family.</text>
</comment>
<dbReference type="EC" id="2.4.2.21" evidence="1"/>
<dbReference type="EMBL" id="AE016823">
    <property type="protein sequence ID" value="AAS71898.1"/>
    <property type="molecule type" value="Genomic_DNA"/>
</dbReference>
<dbReference type="RefSeq" id="WP_001067584.1">
    <property type="nucleotide sequence ID" value="NC_005823.1"/>
</dbReference>
<dbReference type="SMR" id="Q72M35"/>
<dbReference type="GeneID" id="61143222"/>
<dbReference type="KEGG" id="lic:LIC_13356"/>
<dbReference type="HOGENOM" id="CLU_002982_0_0_12"/>
<dbReference type="UniPathway" id="UPA00061">
    <property type="reaction ID" value="UER00516"/>
</dbReference>
<dbReference type="Proteomes" id="UP000007037">
    <property type="component" value="Chromosome I"/>
</dbReference>
<dbReference type="GO" id="GO:0008939">
    <property type="term" value="F:nicotinate-nucleotide-dimethylbenzimidazole phosphoribosyltransferase activity"/>
    <property type="evidence" value="ECO:0007669"/>
    <property type="project" value="UniProtKB-UniRule"/>
</dbReference>
<dbReference type="GO" id="GO:0009236">
    <property type="term" value="P:cobalamin biosynthetic process"/>
    <property type="evidence" value="ECO:0007669"/>
    <property type="project" value="UniProtKB-KW"/>
</dbReference>
<dbReference type="CDD" id="cd02439">
    <property type="entry name" value="DMB-PRT_CobT"/>
    <property type="match status" value="1"/>
</dbReference>
<dbReference type="FunFam" id="3.40.50.10210:FF:000001">
    <property type="entry name" value="Nicotinate-nucleotide--dimethylbenzimidazole phosphoribosyltransferase"/>
    <property type="match status" value="1"/>
</dbReference>
<dbReference type="Gene3D" id="1.10.1610.10">
    <property type="match status" value="1"/>
</dbReference>
<dbReference type="Gene3D" id="3.40.50.10210">
    <property type="match status" value="1"/>
</dbReference>
<dbReference type="HAMAP" id="MF_00230">
    <property type="entry name" value="CobT"/>
    <property type="match status" value="1"/>
</dbReference>
<dbReference type="InterPro" id="IPR003200">
    <property type="entry name" value="Nict_dMeBzImd_PRibTrfase"/>
</dbReference>
<dbReference type="InterPro" id="IPR017846">
    <property type="entry name" value="Nict_dMeBzImd_PRibTrfase_bact"/>
</dbReference>
<dbReference type="InterPro" id="IPR023195">
    <property type="entry name" value="Nict_dMeBzImd_PRibTrfase_N"/>
</dbReference>
<dbReference type="InterPro" id="IPR036087">
    <property type="entry name" value="Nict_dMeBzImd_PRibTrfase_sf"/>
</dbReference>
<dbReference type="NCBIfam" id="TIGR03160">
    <property type="entry name" value="cobT_DBIPRT"/>
    <property type="match status" value="1"/>
</dbReference>
<dbReference type="NCBIfam" id="NF000996">
    <property type="entry name" value="PRK00105.1"/>
    <property type="match status" value="1"/>
</dbReference>
<dbReference type="PANTHER" id="PTHR43463">
    <property type="entry name" value="NICOTINATE-NUCLEOTIDE--DIMETHYLBENZIMIDAZOLE PHOSPHORIBOSYLTRANSFERASE"/>
    <property type="match status" value="1"/>
</dbReference>
<dbReference type="PANTHER" id="PTHR43463:SF1">
    <property type="entry name" value="NICOTINATE-NUCLEOTIDE--DIMETHYLBENZIMIDAZOLE PHOSPHORIBOSYLTRANSFERASE"/>
    <property type="match status" value="1"/>
</dbReference>
<dbReference type="Pfam" id="PF02277">
    <property type="entry name" value="DBI_PRT"/>
    <property type="match status" value="1"/>
</dbReference>
<dbReference type="SUPFAM" id="SSF52733">
    <property type="entry name" value="Nicotinate mononucleotide:5,6-dimethylbenzimidazole phosphoribosyltransferase (CobT)"/>
    <property type="match status" value="1"/>
</dbReference>
<proteinExistence type="inferred from homology"/>
<keyword id="KW-0169">Cobalamin biosynthesis</keyword>
<keyword id="KW-0328">Glycosyltransferase</keyword>
<keyword id="KW-0808">Transferase</keyword>
<sequence>MNPDQLSTKLQNKIDLKTKPPGSLGTLESIALQIGLIQNTDSPELKNPHILVFAGDHGLAESGVSAFPKEVTHQMVFNFLNGGAAINAFCKQNSIRLKVVDSGVDFKFPHDTVSLHPDFIDAKVGFGTKNILIEPAMTKEQCNQALENGARISQKSVSENCNVIGFGEMGIGNTSSASLITASILKKSLKEVTGKGTGLNDQGFQKKIEILEKCFEKHKTNLKTAFDVLQTFGGFEIAMMVGAMIDSVKKGRIILIDGFIATSAFLIAHKMEPSILKNAVFCHKSVEPGHSYLLEEWNIKPLLDLGLRLGEGTGCAIAFPILISAVTFLKEMASFESAKVDQKL</sequence>
<gene>
    <name evidence="1" type="primary">cobT</name>
    <name type="ordered locus">LIC_13356</name>
</gene>
<evidence type="ECO:0000255" key="1">
    <source>
        <dbReference type="HAMAP-Rule" id="MF_00230"/>
    </source>
</evidence>
<name>COBT_LEPIC</name>
<accession>Q72M35</accession>
<feature type="chain" id="PRO_0000167052" description="Nicotinate-nucleotide--dimethylbenzimidazole phosphoribosyltransferase">
    <location>
        <begin position="1"/>
        <end position="344"/>
    </location>
</feature>
<feature type="active site" description="Proton acceptor" evidence="1">
    <location>
        <position position="311"/>
    </location>
</feature>
<protein>
    <recommendedName>
        <fullName evidence="1">Nicotinate-nucleotide--dimethylbenzimidazole phosphoribosyltransferase</fullName>
        <shortName evidence="1">NN:DBI PRT</shortName>
        <ecNumber evidence="1">2.4.2.21</ecNumber>
    </recommendedName>
    <alternativeName>
        <fullName evidence="1">N(1)-alpha-phosphoribosyltransferase</fullName>
    </alternativeName>
</protein>